<comment type="function">
    <text evidence="1">Exhibits a very high intrinsic GTPase hydrolysis rate. Involved in the addition of a carboxymethylaminomethyl (cmnm) group at the wobble position (U34) of certain tRNAs, forming tRNA-cmnm(5)s(2)U34.</text>
</comment>
<comment type="cofactor">
    <cofactor evidence="1">
        <name>K(+)</name>
        <dbReference type="ChEBI" id="CHEBI:29103"/>
    </cofactor>
    <text evidence="1">Binds 1 potassium ion per subunit.</text>
</comment>
<comment type="subunit">
    <text evidence="1">Homodimer. Heterotetramer of two MnmE and two MnmG subunits.</text>
</comment>
<comment type="subcellular location">
    <subcellularLocation>
        <location evidence="1">Cytoplasm</location>
    </subcellularLocation>
</comment>
<comment type="similarity">
    <text evidence="1">Belongs to the TRAFAC class TrmE-Era-EngA-EngB-Septin-like GTPase superfamily. TrmE GTPase family.</text>
</comment>
<feature type="chain" id="PRO_1000197042" description="tRNA modification GTPase MnmE">
    <location>
        <begin position="1"/>
        <end position="460"/>
    </location>
</feature>
<feature type="domain" description="TrmE-type G">
    <location>
        <begin position="222"/>
        <end position="381"/>
    </location>
</feature>
<feature type="binding site" evidence="1">
    <location>
        <position position="26"/>
    </location>
    <ligand>
        <name>(6S)-5-formyl-5,6,7,8-tetrahydrofolate</name>
        <dbReference type="ChEBI" id="CHEBI:57457"/>
    </ligand>
</feature>
<feature type="binding site" evidence="1">
    <location>
        <position position="88"/>
    </location>
    <ligand>
        <name>(6S)-5-formyl-5,6,7,8-tetrahydrofolate</name>
        <dbReference type="ChEBI" id="CHEBI:57457"/>
    </ligand>
</feature>
<feature type="binding site" evidence="1">
    <location>
        <position position="127"/>
    </location>
    <ligand>
        <name>(6S)-5-formyl-5,6,7,8-tetrahydrofolate</name>
        <dbReference type="ChEBI" id="CHEBI:57457"/>
    </ligand>
</feature>
<feature type="binding site" evidence="1">
    <location>
        <begin position="232"/>
        <end position="237"/>
    </location>
    <ligand>
        <name>GTP</name>
        <dbReference type="ChEBI" id="CHEBI:37565"/>
    </ligand>
</feature>
<feature type="binding site" evidence="1">
    <location>
        <position position="232"/>
    </location>
    <ligand>
        <name>K(+)</name>
        <dbReference type="ChEBI" id="CHEBI:29103"/>
    </ligand>
</feature>
<feature type="binding site" evidence="1">
    <location>
        <position position="236"/>
    </location>
    <ligand>
        <name>Mg(2+)</name>
        <dbReference type="ChEBI" id="CHEBI:18420"/>
    </ligand>
</feature>
<feature type="binding site" evidence="1">
    <location>
        <begin position="251"/>
        <end position="257"/>
    </location>
    <ligand>
        <name>GTP</name>
        <dbReference type="ChEBI" id="CHEBI:37565"/>
    </ligand>
</feature>
<feature type="binding site" evidence="1">
    <location>
        <position position="251"/>
    </location>
    <ligand>
        <name>K(+)</name>
        <dbReference type="ChEBI" id="CHEBI:29103"/>
    </ligand>
</feature>
<feature type="binding site" evidence="1">
    <location>
        <position position="253"/>
    </location>
    <ligand>
        <name>K(+)</name>
        <dbReference type="ChEBI" id="CHEBI:29103"/>
    </ligand>
</feature>
<feature type="binding site" evidence="1">
    <location>
        <position position="256"/>
    </location>
    <ligand>
        <name>K(+)</name>
        <dbReference type="ChEBI" id="CHEBI:29103"/>
    </ligand>
</feature>
<feature type="binding site" evidence="1">
    <location>
        <position position="257"/>
    </location>
    <ligand>
        <name>Mg(2+)</name>
        <dbReference type="ChEBI" id="CHEBI:18420"/>
    </ligand>
</feature>
<feature type="binding site" evidence="1">
    <location>
        <begin position="276"/>
        <end position="279"/>
    </location>
    <ligand>
        <name>GTP</name>
        <dbReference type="ChEBI" id="CHEBI:37565"/>
    </ligand>
</feature>
<feature type="binding site" evidence="1">
    <location>
        <position position="460"/>
    </location>
    <ligand>
        <name>(6S)-5-formyl-5,6,7,8-tetrahydrofolate</name>
        <dbReference type="ChEBI" id="CHEBI:57457"/>
    </ligand>
</feature>
<evidence type="ECO:0000255" key="1">
    <source>
        <dbReference type="HAMAP-Rule" id="MF_00379"/>
    </source>
</evidence>
<reference key="1">
    <citation type="journal article" date="2011" name="MBio">
        <title>Novel metabolic attributes of the genus Cyanothece, comprising a group of unicellular nitrogen-fixing Cyanobacteria.</title>
        <authorList>
            <person name="Bandyopadhyay A."/>
            <person name="Elvitigala T."/>
            <person name="Welsh E."/>
            <person name="Stockel J."/>
            <person name="Liberton M."/>
            <person name="Min H."/>
            <person name="Sherman L.A."/>
            <person name="Pakrasi H.B."/>
        </authorList>
    </citation>
    <scope>NUCLEOTIDE SEQUENCE [LARGE SCALE GENOMIC DNA]</scope>
    <source>
        <strain>PCC 7425 / ATCC 29141</strain>
    </source>
</reference>
<keyword id="KW-0963">Cytoplasm</keyword>
<keyword id="KW-0342">GTP-binding</keyword>
<keyword id="KW-0378">Hydrolase</keyword>
<keyword id="KW-0460">Magnesium</keyword>
<keyword id="KW-0479">Metal-binding</keyword>
<keyword id="KW-0547">Nucleotide-binding</keyword>
<keyword id="KW-0630">Potassium</keyword>
<keyword id="KW-0819">tRNA processing</keyword>
<name>MNME_CYAP4</name>
<dbReference type="EC" id="3.6.-.-" evidence="1"/>
<dbReference type="EMBL" id="CP001344">
    <property type="protein sequence ID" value="ACL45976.1"/>
    <property type="molecule type" value="Genomic_DNA"/>
</dbReference>
<dbReference type="SMR" id="B8HSJ3"/>
<dbReference type="STRING" id="395961.Cyan7425_3656"/>
<dbReference type="KEGG" id="cyn:Cyan7425_3656"/>
<dbReference type="eggNOG" id="COG0486">
    <property type="taxonomic scope" value="Bacteria"/>
</dbReference>
<dbReference type="HOGENOM" id="CLU_019624_4_1_3"/>
<dbReference type="OrthoDB" id="9805918at2"/>
<dbReference type="GO" id="GO:0005829">
    <property type="term" value="C:cytosol"/>
    <property type="evidence" value="ECO:0007669"/>
    <property type="project" value="TreeGrafter"/>
</dbReference>
<dbReference type="GO" id="GO:0005525">
    <property type="term" value="F:GTP binding"/>
    <property type="evidence" value="ECO:0007669"/>
    <property type="project" value="UniProtKB-UniRule"/>
</dbReference>
<dbReference type="GO" id="GO:0003924">
    <property type="term" value="F:GTPase activity"/>
    <property type="evidence" value="ECO:0007669"/>
    <property type="project" value="UniProtKB-UniRule"/>
</dbReference>
<dbReference type="GO" id="GO:0046872">
    <property type="term" value="F:metal ion binding"/>
    <property type="evidence" value="ECO:0007669"/>
    <property type="project" value="UniProtKB-KW"/>
</dbReference>
<dbReference type="GO" id="GO:0030488">
    <property type="term" value="P:tRNA methylation"/>
    <property type="evidence" value="ECO:0007669"/>
    <property type="project" value="TreeGrafter"/>
</dbReference>
<dbReference type="GO" id="GO:0002098">
    <property type="term" value="P:tRNA wobble uridine modification"/>
    <property type="evidence" value="ECO:0007669"/>
    <property type="project" value="TreeGrafter"/>
</dbReference>
<dbReference type="CDD" id="cd04164">
    <property type="entry name" value="trmE"/>
    <property type="match status" value="1"/>
</dbReference>
<dbReference type="CDD" id="cd14858">
    <property type="entry name" value="TrmE_N"/>
    <property type="match status" value="1"/>
</dbReference>
<dbReference type="FunFam" id="3.30.1360.120:FF:000003">
    <property type="entry name" value="tRNA modification GTPase MnmE"/>
    <property type="match status" value="1"/>
</dbReference>
<dbReference type="FunFam" id="3.40.50.300:FF:000494">
    <property type="entry name" value="tRNA modification GTPase MnmE"/>
    <property type="match status" value="1"/>
</dbReference>
<dbReference type="Gene3D" id="3.40.50.300">
    <property type="entry name" value="P-loop containing nucleotide triphosphate hydrolases"/>
    <property type="match status" value="1"/>
</dbReference>
<dbReference type="Gene3D" id="3.30.1360.120">
    <property type="entry name" value="Probable tRNA modification gtpase trme, domain 1"/>
    <property type="match status" value="1"/>
</dbReference>
<dbReference type="Gene3D" id="1.20.120.430">
    <property type="entry name" value="tRNA modification GTPase MnmE domain 2"/>
    <property type="match status" value="1"/>
</dbReference>
<dbReference type="HAMAP" id="MF_00379">
    <property type="entry name" value="GTPase_MnmE"/>
    <property type="match status" value="1"/>
</dbReference>
<dbReference type="InterPro" id="IPR031168">
    <property type="entry name" value="G_TrmE"/>
</dbReference>
<dbReference type="InterPro" id="IPR006073">
    <property type="entry name" value="GTP-bd"/>
</dbReference>
<dbReference type="InterPro" id="IPR018948">
    <property type="entry name" value="GTP-bd_TrmE_N"/>
</dbReference>
<dbReference type="InterPro" id="IPR004520">
    <property type="entry name" value="GTPase_MnmE"/>
</dbReference>
<dbReference type="InterPro" id="IPR027368">
    <property type="entry name" value="MnmE_dom2"/>
</dbReference>
<dbReference type="InterPro" id="IPR025867">
    <property type="entry name" value="MnmE_helical"/>
</dbReference>
<dbReference type="InterPro" id="IPR027417">
    <property type="entry name" value="P-loop_NTPase"/>
</dbReference>
<dbReference type="InterPro" id="IPR005225">
    <property type="entry name" value="Small_GTP-bd"/>
</dbReference>
<dbReference type="InterPro" id="IPR027266">
    <property type="entry name" value="TrmE/GcvT_dom1"/>
</dbReference>
<dbReference type="NCBIfam" id="TIGR00450">
    <property type="entry name" value="mnmE_trmE_thdF"/>
    <property type="match status" value="1"/>
</dbReference>
<dbReference type="NCBIfam" id="NF003661">
    <property type="entry name" value="PRK05291.1-3"/>
    <property type="match status" value="1"/>
</dbReference>
<dbReference type="NCBIfam" id="TIGR00231">
    <property type="entry name" value="small_GTP"/>
    <property type="match status" value="1"/>
</dbReference>
<dbReference type="PANTHER" id="PTHR42714">
    <property type="entry name" value="TRNA MODIFICATION GTPASE GTPBP3"/>
    <property type="match status" value="1"/>
</dbReference>
<dbReference type="PANTHER" id="PTHR42714:SF2">
    <property type="entry name" value="TRNA MODIFICATION GTPASE GTPBP3, MITOCHONDRIAL"/>
    <property type="match status" value="1"/>
</dbReference>
<dbReference type="Pfam" id="PF01926">
    <property type="entry name" value="MMR_HSR1"/>
    <property type="match status" value="1"/>
</dbReference>
<dbReference type="Pfam" id="PF12631">
    <property type="entry name" value="MnmE_helical"/>
    <property type="match status" value="1"/>
</dbReference>
<dbReference type="Pfam" id="PF10396">
    <property type="entry name" value="TrmE_N"/>
    <property type="match status" value="1"/>
</dbReference>
<dbReference type="PRINTS" id="PR00449">
    <property type="entry name" value="RASTRNSFRMNG"/>
</dbReference>
<dbReference type="SUPFAM" id="SSF52540">
    <property type="entry name" value="P-loop containing nucleoside triphosphate hydrolases"/>
    <property type="match status" value="1"/>
</dbReference>
<dbReference type="SUPFAM" id="SSF116878">
    <property type="entry name" value="TrmE connector domain"/>
    <property type="match status" value="1"/>
</dbReference>
<dbReference type="PROSITE" id="PS51709">
    <property type="entry name" value="G_TRME"/>
    <property type="match status" value="1"/>
</dbReference>
<proteinExistence type="inferred from homology"/>
<organism>
    <name type="scientific">Cyanothece sp. (strain PCC 7425 / ATCC 29141)</name>
    <dbReference type="NCBI Taxonomy" id="395961"/>
    <lineage>
        <taxon>Bacteria</taxon>
        <taxon>Bacillati</taxon>
        <taxon>Cyanobacteriota</taxon>
        <taxon>Cyanophyceae</taxon>
        <taxon>Gomontiellales</taxon>
        <taxon>Cyanothecaceae</taxon>
        <taxon>Cyanothece</taxon>
    </lineage>
</organism>
<sequence length="460" mass="49888">MLNPGQTIAAIATAIVPQQGSIAIVRLSGSEAVAIAQRLFIAPGQQVWESHRILYGYVCNPRTGQRVDEALLLLMLAPRSYTKEDVVEFHCHGGMIAVQQVLQLCLEAGAVLAQPGEFTLRAFLHGRLDLTQAESVADLVGAKSPQAAQAALAGLQGKLIQPLQQLRRTCIDILAEIEARIDFEEDLPPLDLNQISSQIQHSLTEVNRILATADRGELLRTGLKVAIVGRPNVGKSSLLNAWSRSDRAIVTELPGTTRDVVESYLVVGGIPVQVLDTAGIRETSDQVEQIGVERSHKAAQAADLVLLVIDAQTGWTAEDQAIYTQVQERSLILVINKIDLVDQAFQPQACLPDPALTYLCTAAAQNQGIEDLESAILSKVQGGELEGANLDWAINQRQAAALTRAKLSLENVQETIANQLPLDFWTIDLREAIRALGEITGEEVTESVLDQIFSRFCIGK</sequence>
<accession>B8HSJ3</accession>
<gene>
    <name evidence="1" type="primary">mnmE</name>
    <name evidence="1" type="synonym">trmE</name>
    <name type="ordered locus">Cyan7425_3656</name>
</gene>
<protein>
    <recommendedName>
        <fullName evidence="1">tRNA modification GTPase MnmE</fullName>
        <ecNumber evidence="1">3.6.-.-</ecNumber>
    </recommendedName>
</protein>